<dbReference type="EC" id="2.3.1.16" evidence="1"/>
<dbReference type="EMBL" id="CP000521">
    <property type="protein sequence ID" value="ABO10773.2"/>
    <property type="molecule type" value="Genomic_DNA"/>
</dbReference>
<dbReference type="RefSeq" id="WP_000212708.1">
    <property type="nucleotide sequence ID" value="NZ_CACVBA010000001.1"/>
</dbReference>
<dbReference type="SMR" id="A3M1H9"/>
<dbReference type="KEGG" id="acb:A1S_0305"/>
<dbReference type="HOGENOM" id="CLU_031026_2_2_6"/>
<dbReference type="UniPathway" id="UPA00659"/>
<dbReference type="GO" id="GO:0005737">
    <property type="term" value="C:cytoplasm"/>
    <property type="evidence" value="ECO:0007669"/>
    <property type="project" value="UniProtKB-SubCell"/>
</dbReference>
<dbReference type="GO" id="GO:0003988">
    <property type="term" value="F:acetyl-CoA C-acyltransferase activity"/>
    <property type="evidence" value="ECO:0007669"/>
    <property type="project" value="UniProtKB-UniRule"/>
</dbReference>
<dbReference type="GO" id="GO:0006635">
    <property type="term" value="P:fatty acid beta-oxidation"/>
    <property type="evidence" value="ECO:0007669"/>
    <property type="project" value="UniProtKB-UniRule"/>
</dbReference>
<dbReference type="GO" id="GO:0010124">
    <property type="term" value="P:phenylacetate catabolic process"/>
    <property type="evidence" value="ECO:0007669"/>
    <property type="project" value="TreeGrafter"/>
</dbReference>
<dbReference type="CDD" id="cd00751">
    <property type="entry name" value="thiolase"/>
    <property type="match status" value="1"/>
</dbReference>
<dbReference type="FunFam" id="3.40.47.10:FF:000010">
    <property type="entry name" value="Acetyl-CoA acetyltransferase (Thiolase)"/>
    <property type="match status" value="1"/>
</dbReference>
<dbReference type="Gene3D" id="3.40.47.10">
    <property type="match status" value="2"/>
</dbReference>
<dbReference type="HAMAP" id="MF_01620">
    <property type="entry name" value="FadA"/>
    <property type="match status" value="1"/>
</dbReference>
<dbReference type="InterPro" id="IPR012805">
    <property type="entry name" value="FadA"/>
</dbReference>
<dbReference type="InterPro" id="IPR002155">
    <property type="entry name" value="Thiolase"/>
</dbReference>
<dbReference type="InterPro" id="IPR016039">
    <property type="entry name" value="Thiolase-like"/>
</dbReference>
<dbReference type="InterPro" id="IPR050215">
    <property type="entry name" value="Thiolase-like_sf_Thiolase"/>
</dbReference>
<dbReference type="InterPro" id="IPR020615">
    <property type="entry name" value="Thiolase_acyl_enz_int_AS"/>
</dbReference>
<dbReference type="InterPro" id="IPR020610">
    <property type="entry name" value="Thiolase_AS"/>
</dbReference>
<dbReference type="InterPro" id="IPR020617">
    <property type="entry name" value="Thiolase_C"/>
</dbReference>
<dbReference type="InterPro" id="IPR020613">
    <property type="entry name" value="Thiolase_CS"/>
</dbReference>
<dbReference type="InterPro" id="IPR020616">
    <property type="entry name" value="Thiolase_N"/>
</dbReference>
<dbReference type="NCBIfam" id="TIGR01930">
    <property type="entry name" value="AcCoA-C-Actrans"/>
    <property type="match status" value="1"/>
</dbReference>
<dbReference type="NCBIfam" id="TIGR02445">
    <property type="entry name" value="fadA"/>
    <property type="match status" value="1"/>
</dbReference>
<dbReference type="NCBIfam" id="NF006510">
    <property type="entry name" value="PRK08947.1"/>
    <property type="match status" value="1"/>
</dbReference>
<dbReference type="PANTHER" id="PTHR43853:SF11">
    <property type="entry name" value="3-KETOACYL-COA THIOLASE FADA"/>
    <property type="match status" value="1"/>
</dbReference>
<dbReference type="PANTHER" id="PTHR43853">
    <property type="entry name" value="3-KETOACYL-COA THIOLASE, PEROXISOMAL"/>
    <property type="match status" value="1"/>
</dbReference>
<dbReference type="Pfam" id="PF02803">
    <property type="entry name" value="Thiolase_C"/>
    <property type="match status" value="1"/>
</dbReference>
<dbReference type="Pfam" id="PF00108">
    <property type="entry name" value="Thiolase_N"/>
    <property type="match status" value="1"/>
</dbReference>
<dbReference type="PIRSF" id="PIRSF000429">
    <property type="entry name" value="Ac-CoA_Ac_transf"/>
    <property type="match status" value="1"/>
</dbReference>
<dbReference type="SUPFAM" id="SSF53901">
    <property type="entry name" value="Thiolase-like"/>
    <property type="match status" value="2"/>
</dbReference>
<dbReference type="PROSITE" id="PS00098">
    <property type="entry name" value="THIOLASE_1"/>
    <property type="match status" value="1"/>
</dbReference>
<dbReference type="PROSITE" id="PS00737">
    <property type="entry name" value="THIOLASE_2"/>
    <property type="match status" value="1"/>
</dbReference>
<dbReference type="PROSITE" id="PS00099">
    <property type="entry name" value="THIOLASE_3"/>
    <property type="match status" value="1"/>
</dbReference>
<keyword id="KW-0012">Acyltransferase</keyword>
<keyword id="KW-0963">Cytoplasm</keyword>
<keyword id="KW-0276">Fatty acid metabolism</keyword>
<keyword id="KW-0442">Lipid degradation</keyword>
<keyword id="KW-0443">Lipid metabolism</keyword>
<keyword id="KW-0808">Transferase</keyword>
<organism>
    <name type="scientific">Acinetobacter baumannii (strain ATCC 17978 / DSM 105126 / CIP 53.77 / LMG 1025 / NCDC KC755 / 5377)</name>
    <dbReference type="NCBI Taxonomy" id="400667"/>
    <lineage>
        <taxon>Bacteria</taxon>
        <taxon>Pseudomonadati</taxon>
        <taxon>Pseudomonadota</taxon>
        <taxon>Gammaproteobacteria</taxon>
        <taxon>Moraxellales</taxon>
        <taxon>Moraxellaceae</taxon>
        <taxon>Acinetobacter</taxon>
        <taxon>Acinetobacter calcoaceticus/baumannii complex</taxon>
    </lineage>
</organism>
<name>FADA_ACIBT</name>
<gene>
    <name evidence="1" type="primary">fadA</name>
    <name type="ordered locus">A1S_0305</name>
</gene>
<proteinExistence type="inferred from homology"/>
<evidence type="ECO:0000255" key="1">
    <source>
        <dbReference type="HAMAP-Rule" id="MF_01620"/>
    </source>
</evidence>
<reference key="1">
    <citation type="journal article" date="2007" name="Genes Dev.">
        <title>New insights into Acinetobacter baumannii pathogenesis revealed by high-density pyrosequencing and transposon mutagenesis.</title>
        <authorList>
            <person name="Smith M.G."/>
            <person name="Gianoulis T.A."/>
            <person name="Pukatzki S."/>
            <person name="Mekalanos J.J."/>
            <person name="Ornston L.N."/>
            <person name="Gerstein M."/>
            <person name="Snyder M."/>
        </authorList>
    </citation>
    <scope>NUCLEOTIDE SEQUENCE [LARGE SCALE GENOMIC DNA]</scope>
    <source>
        <strain>ATCC 17978 / DSM 105126 / CIP 53.77 / LMG 1025 / NCDC KC755 / 5377</strain>
    </source>
</reference>
<accession>A3M1H9</accession>
<comment type="function">
    <text evidence="1">Catalyzes the final step of fatty acid oxidation in which acetyl-CoA is released and the CoA ester of a fatty acid two carbons shorter is formed.</text>
</comment>
<comment type="catalytic activity">
    <reaction evidence="1">
        <text>an acyl-CoA + acetyl-CoA = a 3-oxoacyl-CoA + CoA</text>
        <dbReference type="Rhea" id="RHEA:21564"/>
        <dbReference type="ChEBI" id="CHEBI:57287"/>
        <dbReference type="ChEBI" id="CHEBI:57288"/>
        <dbReference type="ChEBI" id="CHEBI:58342"/>
        <dbReference type="ChEBI" id="CHEBI:90726"/>
        <dbReference type="EC" id="2.3.1.16"/>
    </reaction>
</comment>
<comment type="pathway">
    <text evidence="1">Lipid metabolism; fatty acid beta-oxidation.</text>
</comment>
<comment type="subunit">
    <text evidence="1">Heterotetramer of two alpha chains (FadB) and two beta chains (FadA).</text>
</comment>
<comment type="subcellular location">
    <subcellularLocation>
        <location evidence="1">Cytoplasm</location>
    </subcellularLocation>
</comment>
<comment type="similarity">
    <text evidence="1">Belongs to the thiolase-like superfamily. Thiolase family.</text>
</comment>
<sequence>MATLNPRDVVIVDGVRSAMGKSKNGMFRNVRADSLSAELVRALIARNQFDVNEVEDLIWGCVNQTLEQGMNIGRNIGLLAGLPKTVAGQTVNRLCGSSMQAIHTAAAQIATNQGDIFIIGGVEHMGHVGMMHGIDLNPEASKHYAKASNMMGLTAEMLGRMNGITREEQDTFGVESHRRAWAATQEGRFKNEIIGVEGHDANGFKILCDIDEVIRPDANLEAFKALKPVFDPKGGSVTAATSSALSDGASAMLLMSAERAQALGLKPRAVIRSMAVAGCDAAIMGYGPVPATQKALKRAGLSIADIQTVELNEAFAAQGLSVLKGLGLYDKQDIVNLNGGAIALGHPLGCSGARITTTLLNVMEQQDTQIGLATMCIGLGQGIATVIERV</sequence>
<protein>
    <recommendedName>
        <fullName evidence="1">3-ketoacyl-CoA thiolase</fullName>
        <ecNumber evidence="1">2.3.1.16</ecNumber>
    </recommendedName>
    <alternativeName>
        <fullName evidence="1">Acetyl-CoA acyltransferase</fullName>
    </alternativeName>
    <alternativeName>
        <fullName evidence="1">Beta-ketothiolase</fullName>
    </alternativeName>
    <alternativeName>
        <fullName evidence="1">Fatty acid oxidation complex subunit beta</fullName>
    </alternativeName>
</protein>
<feature type="chain" id="PRO_0000292883" description="3-ketoacyl-CoA thiolase">
    <location>
        <begin position="1"/>
        <end position="390"/>
    </location>
</feature>
<feature type="active site" description="Acyl-thioester intermediate" evidence="1">
    <location>
        <position position="95"/>
    </location>
</feature>
<feature type="active site" description="Proton acceptor" evidence="1">
    <location>
        <position position="346"/>
    </location>
</feature>
<feature type="active site" description="Proton acceptor" evidence="1">
    <location>
        <position position="376"/>
    </location>
</feature>